<feature type="chain" id="PRO_1000125121" description="Fluoride-specific ion channel FluC">
    <location>
        <begin position="1"/>
        <end position="124"/>
    </location>
</feature>
<feature type="transmembrane region" description="Helical" evidence="1">
    <location>
        <begin position="4"/>
        <end position="24"/>
    </location>
</feature>
<feature type="transmembrane region" description="Helical" evidence="1">
    <location>
        <begin position="35"/>
        <end position="55"/>
    </location>
</feature>
<feature type="transmembrane region" description="Helical" evidence="1">
    <location>
        <begin position="67"/>
        <end position="87"/>
    </location>
</feature>
<feature type="transmembrane region" description="Helical" evidence="1">
    <location>
        <begin position="96"/>
        <end position="116"/>
    </location>
</feature>
<feature type="binding site" evidence="1">
    <location>
        <position position="75"/>
    </location>
    <ligand>
        <name>Na(+)</name>
        <dbReference type="ChEBI" id="CHEBI:29101"/>
        <note>structural</note>
    </ligand>
</feature>
<feature type="binding site" evidence="1">
    <location>
        <position position="78"/>
    </location>
    <ligand>
        <name>Na(+)</name>
        <dbReference type="ChEBI" id="CHEBI:29101"/>
        <note>structural</note>
    </ligand>
</feature>
<dbReference type="EMBL" id="CP001197">
    <property type="protein sequence ID" value="ACL07418.1"/>
    <property type="molecule type" value="Genomic_DNA"/>
</dbReference>
<dbReference type="SMR" id="B8DJU6"/>
<dbReference type="STRING" id="883.DvMF_0461"/>
<dbReference type="KEGG" id="dvm:DvMF_0461"/>
<dbReference type="eggNOG" id="COG0239">
    <property type="taxonomic scope" value="Bacteria"/>
</dbReference>
<dbReference type="HOGENOM" id="CLU_114342_3_0_7"/>
<dbReference type="OrthoDB" id="9806299at2"/>
<dbReference type="GO" id="GO:0005886">
    <property type="term" value="C:plasma membrane"/>
    <property type="evidence" value="ECO:0007669"/>
    <property type="project" value="UniProtKB-SubCell"/>
</dbReference>
<dbReference type="GO" id="GO:0062054">
    <property type="term" value="F:fluoride channel activity"/>
    <property type="evidence" value="ECO:0007669"/>
    <property type="project" value="UniProtKB-UniRule"/>
</dbReference>
<dbReference type="GO" id="GO:0046872">
    <property type="term" value="F:metal ion binding"/>
    <property type="evidence" value="ECO:0007669"/>
    <property type="project" value="UniProtKB-KW"/>
</dbReference>
<dbReference type="GO" id="GO:0140114">
    <property type="term" value="P:cellular detoxification of fluoride"/>
    <property type="evidence" value="ECO:0007669"/>
    <property type="project" value="UniProtKB-UniRule"/>
</dbReference>
<dbReference type="HAMAP" id="MF_00454">
    <property type="entry name" value="FluC"/>
    <property type="match status" value="1"/>
</dbReference>
<dbReference type="InterPro" id="IPR003691">
    <property type="entry name" value="FluC"/>
</dbReference>
<dbReference type="NCBIfam" id="TIGR00494">
    <property type="entry name" value="crcB"/>
    <property type="match status" value="1"/>
</dbReference>
<dbReference type="PANTHER" id="PTHR28259">
    <property type="entry name" value="FLUORIDE EXPORT PROTEIN 1-RELATED"/>
    <property type="match status" value="1"/>
</dbReference>
<dbReference type="PANTHER" id="PTHR28259:SF18">
    <property type="entry name" value="FLUORIDE-SPECIFIC ION CHANNEL FLUC"/>
    <property type="match status" value="1"/>
</dbReference>
<dbReference type="Pfam" id="PF02537">
    <property type="entry name" value="CRCB"/>
    <property type="match status" value="1"/>
</dbReference>
<keyword id="KW-0997">Cell inner membrane</keyword>
<keyword id="KW-1003">Cell membrane</keyword>
<keyword id="KW-0407">Ion channel</keyword>
<keyword id="KW-0406">Ion transport</keyword>
<keyword id="KW-0472">Membrane</keyword>
<keyword id="KW-0479">Metal-binding</keyword>
<keyword id="KW-0915">Sodium</keyword>
<keyword id="KW-0812">Transmembrane</keyword>
<keyword id="KW-1133">Transmembrane helix</keyword>
<keyword id="KW-0813">Transport</keyword>
<accession>B8DJU6</accession>
<organism>
    <name type="scientific">Nitratidesulfovibrio vulgaris (strain DSM 19637 / Miyazaki F)</name>
    <name type="common">Desulfovibrio vulgaris</name>
    <dbReference type="NCBI Taxonomy" id="883"/>
    <lineage>
        <taxon>Bacteria</taxon>
        <taxon>Pseudomonadati</taxon>
        <taxon>Thermodesulfobacteriota</taxon>
        <taxon>Desulfovibrionia</taxon>
        <taxon>Desulfovibrionales</taxon>
        <taxon>Desulfovibrionaceae</taxon>
        <taxon>Nitratidesulfovibrio</taxon>
    </lineage>
</organism>
<sequence length="124" mass="13081">MQKIVLLGLAGALGSLARYGLAGLVQRAAPGSFPLGTFIVNVLGCLAFGFVWGVCENRISLHPDLRVVLLTGFMGAFTTFSTFTFESLGLMETGQWLAFALYAGGQLLLGLALLWLGLGTGRLV</sequence>
<evidence type="ECO:0000255" key="1">
    <source>
        <dbReference type="HAMAP-Rule" id="MF_00454"/>
    </source>
</evidence>
<reference key="1">
    <citation type="submission" date="2008-10" db="EMBL/GenBank/DDBJ databases">
        <title>Complete sequence of Desulfovibrio vulgaris str. 'Miyazaki F'.</title>
        <authorList>
            <person name="Lucas S."/>
            <person name="Copeland A."/>
            <person name="Lapidus A."/>
            <person name="Glavina del Rio T."/>
            <person name="Dalin E."/>
            <person name="Tice H."/>
            <person name="Bruce D."/>
            <person name="Goodwin L."/>
            <person name="Pitluck S."/>
            <person name="Sims D."/>
            <person name="Brettin T."/>
            <person name="Detter J.C."/>
            <person name="Han C."/>
            <person name="Larimer F."/>
            <person name="Land M."/>
            <person name="Hauser L."/>
            <person name="Kyrpides N."/>
            <person name="Mikhailova N."/>
            <person name="Hazen T.C."/>
            <person name="Richardson P."/>
        </authorList>
    </citation>
    <scope>NUCLEOTIDE SEQUENCE [LARGE SCALE GENOMIC DNA]</scope>
    <source>
        <strain>DSM 19637 / Miyazaki F</strain>
    </source>
</reference>
<protein>
    <recommendedName>
        <fullName evidence="1">Fluoride-specific ion channel FluC</fullName>
    </recommendedName>
</protein>
<proteinExistence type="inferred from homology"/>
<name>FLUC_NITV9</name>
<comment type="function">
    <text evidence="1">Fluoride-specific ion channel. Important for reducing fluoride concentration in the cell, thus reducing its toxicity.</text>
</comment>
<comment type="catalytic activity">
    <reaction evidence="1">
        <text>fluoride(in) = fluoride(out)</text>
        <dbReference type="Rhea" id="RHEA:76159"/>
        <dbReference type="ChEBI" id="CHEBI:17051"/>
    </reaction>
    <physiologicalReaction direction="left-to-right" evidence="1">
        <dbReference type="Rhea" id="RHEA:76160"/>
    </physiologicalReaction>
</comment>
<comment type="activity regulation">
    <text evidence="1">Na(+) is not transported, but it plays an essential structural role and its presence is essential for fluoride channel function.</text>
</comment>
<comment type="subcellular location">
    <subcellularLocation>
        <location evidence="1">Cell inner membrane</location>
        <topology evidence="1">Multi-pass membrane protein</topology>
    </subcellularLocation>
</comment>
<comment type="similarity">
    <text evidence="1">Belongs to the fluoride channel Fluc/FEX (TC 1.A.43) family.</text>
</comment>
<gene>
    <name evidence="1" type="primary">fluC</name>
    <name evidence="1" type="synonym">crcB</name>
    <name type="ordered locus">DvMF_0461</name>
</gene>